<gene>
    <name type="primary">msp-49</name>
    <name type="ORF">C34F11.6</name>
</gene>
<proteinExistence type="evidence at transcript level"/>
<comment type="function">
    <text>Central component in molecular interactions underlying sperm crawling. Forms an extensive filament system that extends from sperm villipoda, along the leading edge of the pseudopod.</text>
</comment>
<comment type="subcellular location">
    <subcellularLocation>
        <location>Cell projection</location>
        <location>Pseudopodium</location>
    </subcellularLocation>
    <subcellularLocation>
        <location>Cytoplasm</location>
        <location>Cytoskeleton</location>
    </subcellularLocation>
</comment>
<comment type="tissue specificity">
    <text>Sperm.</text>
</comment>
<comment type="miscellaneous">
    <text>Around 30 MSP isoforms may exist in C.elegans.</text>
</comment>
<accession>Q18461</accession>
<evidence type="ECO:0000250" key="1"/>
<evidence type="ECO:0000255" key="2">
    <source>
        <dbReference type="PROSITE-ProRule" id="PRU00132"/>
    </source>
</evidence>
<protein>
    <recommendedName>
        <fullName>Major sperm protein 49</fullName>
        <shortName>MSP</shortName>
    </recommendedName>
</protein>
<sequence length="127" mass="14221">MAQSVPPGDIQTQPGTKIVFNAPYDDKHTYHIKVINSSARRIGYGIKTINMKRLGVDPPCGVLDPKEAVLLAVSCDAFAFGQEDTNNDRITVEWTNTPDGAAKQFRREWFQGDGMVRRKNLPIEYNP</sequence>
<organism>
    <name type="scientific">Caenorhabditis elegans</name>
    <dbReference type="NCBI Taxonomy" id="6239"/>
    <lineage>
        <taxon>Eukaryota</taxon>
        <taxon>Metazoa</taxon>
        <taxon>Ecdysozoa</taxon>
        <taxon>Nematoda</taxon>
        <taxon>Chromadorea</taxon>
        <taxon>Rhabditida</taxon>
        <taxon>Rhabditina</taxon>
        <taxon>Rhabditomorpha</taxon>
        <taxon>Rhabditoidea</taxon>
        <taxon>Rhabditidae</taxon>
        <taxon>Peloderinae</taxon>
        <taxon>Caenorhabditis</taxon>
    </lineage>
</organism>
<feature type="initiator methionine" description="Removed" evidence="1">
    <location>
        <position position="1"/>
    </location>
</feature>
<feature type="chain" id="PRO_0000213441" description="Major sperm protein 49">
    <location>
        <begin position="2"/>
        <end position="127"/>
    </location>
</feature>
<feature type="domain" description="MSP" evidence="2">
    <location>
        <begin position="9"/>
        <end position="126"/>
    </location>
</feature>
<feature type="modified residue" description="N-acetylalanine" evidence="1">
    <location>
        <position position="2"/>
    </location>
</feature>
<reference key="1">
    <citation type="journal article" date="1998" name="Science">
        <title>Genome sequence of the nematode C. elegans: a platform for investigating biology.</title>
        <authorList>
            <consortium name="The C. elegans sequencing consortium"/>
        </authorList>
    </citation>
    <scope>NUCLEOTIDE SEQUENCE [LARGE SCALE GENOMIC DNA]</scope>
    <source>
        <strain>Bristol N2</strain>
    </source>
</reference>
<name>MSP49_CAEEL</name>
<dbReference type="EMBL" id="FO080689">
    <property type="protein sequence ID" value="CCD65826.1"/>
    <property type="molecule type" value="Genomic_DNA"/>
</dbReference>
<dbReference type="PIR" id="F88146">
    <property type="entry name" value="F88146"/>
</dbReference>
<dbReference type="RefSeq" id="NP_001367576.1">
    <property type="nucleotide sequence ID" value="NM_001381414.1"/>
</dbReference>
<dbReference type="RefSeq" id="NP_494970.1">
    <property type="nucleotide sequence ID" value="NM_062569.5"/>
</dbReference>
<dbReference type="SMR" id="Q18461"/>
<dbReference type="FunCoup" id="Q18461">
    <property type="interactions" value="13"/>
</dbReference>
<dbReference type="STRING" id="6239.C34F11.6.1"/>
<dbReference type="PaxDb" id="6239-C34F11.6"/>
<dbReference type="PeptideAtlas" id="Q18461"/>
<dbReference type="EnsemblMetazoa" id="C34F11.6.1">
    <property type="protein sequence ID" value="C34F11.6.1"/>
    <property type="gene ID" value="WBGene00003442"/>
</dbReference>
<dbReference type="GeneID" id="173888"/>
<dbReference type="UCSC" id="C34F11.6">
    <property type="organism name" value="c. elegans"/>
</dbReference>
<dbReference type="AGR" id="WB:WBGene00003442"/>
<dbReference type="WormBase" id="C34F11.6">
    <property type="protein sequence ID" value="CE04166"/>
    <property type="gene ID" value="WBGene00003442"/>
    <property type="gene designation" value="msp-49"/>
</dbReference>
<dbReference type="eggNOG" id="ENOG502RXF6">
    <property type="taxonomic scope" value="Eukaryota"/>
</dbReference>
<dbReference type="GeneTree" id="ENSGT00970000195833"/>
<dbReference type="HOGENOM" id="CLU_120664_0_1_1"/>
<dbReference type="InParanoid" id="Q18461"/>
<dbReference type="OrthoDB" id="5918453at2759"/>
<dbReference type="PhylomeDB" id="Q18461"/>
<dbReference type="PRO" id="PR:Q18461"/>
<dbReference type="Proteomes" id="UP000001940">
    <property type="component" value="Chromosome II"/>
</dbReference>
<dbReference type="Bgee" id="WBGene00003442">
    <property type="expression patterns" value="Expressed in material anatomical entity and 2 other cell types or tissues"/>
</dbReference>
<dbReference type="GO" id="GO:0005737">
    <property type="term" value="C:cytoplasm"/>
    <property type="evidence" value="ECO:0007669"/>
    <property type="project" value="UniProtKB-KW"/>
</dbReference>
<dbReference type="GO" id="GO:0005856">
    <property type="term" value="C:cytoskeleton"/>
    <property type="evidence" value="ECO:0007669"/>
    <property type="project" value="UniProtKB-SubCell"/>
</dbReference>
<dbReference type="GO" id="GO:0031143">
    <property type="term" value="C:pseudopodium"/>
    <property type="evidence" value="ECO:0007669"/>
    <property type="project" value="UniProtKB-SubCell"/>
</dbReference>
<dbReference type="FunFam" id="2.60.40.10:FF:001120">
    <property type="entry name" value="Major sperm protein 19/31/40/45/50/51/53/59/61/65/81/113/142"/>
    <property type="match status" value="1"/>
</dbReference>
<dbReference type="Gene3D" id="2.60.40.10">
    <property type="entry name" value="Immunoglobulins"/>
    <property type="match status" value="1"/>
</dbReference>
<dbReference type="InterPro" id="IPR013783">
    <property type="entry name" value="Ig-like_fold"/>
</dbReference>
<dbReference type="InterPro" id="IPR000535">
    <property type="entry name" value="MSP_dom"/>
</dbReference>
<dbReference type="InterPro" id="IPR051155">
    <property type="entry name" value="Nematode_MSP"/>
</dbReference>
<dbReference type="InterPro" id="IPR008962">
    <property type="entry name" value="PapD-like_sf"/>
</dbReference>
<dbReference type="PANTHER" id="PTHR22920">
    <property type="entry name" value="MAJOR SPERM PROTEIN"/>
    <property type="match status" value="1"/>
</dbReference>
<dbReference type="PANTHER" id="PTHR22920:SF7">
    <property type="entry name" value="MSP DOMAIN-CONTAINING PROTEIN-RELATED"/>
    <property type="match status" value="1"/>
</dbReference>
<dbReference type="Pfam" id="PF00635">
    <property type="entry name" value="Motile_Sperm"/>
    <property type="match status" value="1"/>
</dbReference>
<dbReference type="SUPFAM" id="SSF49354">
    <property type="entry name" value="PapD-like"/>
    <property type="match status" value="1"/>
</dbReference>
<dbReference type="PROSITE" id="PS50202">
    <property type="entry name" value="MSP"/>
    <property type="match status" value="1"/>
</dbReference>
<keyword id="KW-0007">Acetylation</keyword>
<keyword id="KW-0966">Cell projection</keyword>
<keyword id="KW-0963">Cytoplasm</keyword>
<keyword id="KW-0206">Cytoskeleton</keyword>
<keyword id="KW-1185">Reference proteome</keyword>